<name>TMPA_LEICA</name>
<feature type="chain" id="PRO_0000457767" description="[2-(trimethylamino)ethyl]phosphonate dioxygenase">
    <location>
        <begin position="1"/>
        <end position="377"/>
    </location>
</feature>
<feature type="region of interest" description="Disordered" evidence="1">
    <location>
        <begin position="95"/>
        <end position="119"/>
    </location>
</feature>
<feature type="binding site" evidence="2 6 7">
    <location>
        <position position="187"/>
    </location>
    <ligand>
        <name>[2-(trimethylamino)ethyl]phosphonate</name>
        <dbReference type="ChEBI" id="CHEBI:149625"/>
    </ligand>
</feature>
<feature type="binding site" evidence="2 5 6">
    <location>
        <position position="198"/>
    </location>
    <ligand>
        <name>2-oxoglutarate</name>
        <dbReference type="ChEBI" id="CHEBI:16810"/>
    </ligand>
</feature>
<feature type="binding site" evidence="2 5 6 7">
    <location>
        <position position="198"/>
    </location>
    <ligand>
        <name>Fe(2+)</name>
        <dbReference type="ChEBI" id="CHEBI:29033"/>
    </ligand>
</feature>
<feature type="binding site" evidence="2 7">
    <location>
        <position position="200"/>
    </location>
    <ligand>
        <name>[2-(trimethylamino)ethyl]phosphonate</name>
        <dbReference type="ChEBI" id="CHEBI:149625"/>
    </ligand>
</feature>
<feature type="binding site" evidence="2 5 6 7">
    <location>
        <position position="200"/>
    </location>
    <ligand>
        <name>Fe(2+)</name>
        <dbReference type="ChEBI" id="CHEBI:29033"/>
    </ligand>
</feature>
<feature type="binding site" evidence="2 6 7">
    <location>
        <position position="201"/>
    </location>
    <ligand>
        <name>[2-(trimethylamino)ethyl]phosphonate</name>
        <dbReference type="ChEBI" id="CHEBI:149625"/>
    </ligand>
</feature>
<feature type="binding site" evidence="2 6 7">
    <location>
        <position position="203"/>
    </location>
    <ligand>
        <name>[2-(trimethylamino)ethyl]phosphonate</name>
        <dbReference type="ChEBI" id="CHEBI:149625"/>
    </ligand>
</feature>
<feature type="binding site" evidence="2 6 7">
    <location>
        <position position="286"/>
    </location>
    <ligand>
        <name>[2-(trimethylamino)ethyl]phosphonate</name>
        <dbReference type="ChEBI" id="CHEBI:149625"/>
    </ligand>
</feature>
<feature type="binding site" evidence="2 6 7">
    <location>
        <position position="288"/>
    </location>
    <ligand>
        <name>[2-(trimethylamino)ethyl]phosphonate</name>
        <dbReference type="ChEBI" id="CHEBI:149625"/>
    </ligand>
</feature>
<feature type="binding site" evidence="2 5 6">
    <location>
        <position position="341"/>
    </location>
    <ligand>
        <name>2-oxoglutarate</name>
        <dbReference type="ChEBI" id="CHEBI:16810"/>
    </ligand>
</feature>
<feature type="binding site" evidence="2 5 6 7">
    <location>
        <position position="341"/>
    </location>
    <ligand>
        <name>Fe(2+)</name>
        <dbReference type="ChEBI" id="CHEBI:29033"/>
    </ligand>
</feature>
<feature type="binding site" evidence="2 5 6">
    <location>
        <position position="343"/>
    </location>
    <ligand>
        <name>2-oxoglutarate</name>
        <dbReference type="ChEBI" id="CHEBI:16810"/>
    </ligand>
</feature>
<feature type="binding site" evidence="2 5 6">
    <location>
        <position position="352"/>
    </location>
    <ligand>
        <name>2-oxoglutarate</name>
        <dbReference type="ChEBI" id="CHEBI:16810"/>
    </ligand>
</feature>
<feature type="strand" evidence="8">
    <location>
        <begin position="1"/>
        <end position="7"/>
    </location>
</feature>
<feature type="strand" evidence="8">
    <location>
        <begin position="11"/>
        <end position="18"/>
    </location>
</feature>
<feature type="strand" evidence="8">
    <location>
        <begin position="23"/>
        <end position="27"/>
    </location>
</feature>
<feature type="helix" evidence="8">
    <location>
        <begin position="28"/>
        <end position="33"/>
    </location>
</feature>
<feature type="turn" evidence="8">
    <location>
        <begin position="38"/>
        <end position="40"/>
    </location>
</feature>
<feature type="turn" evidence="8">
    <location>
        <begin position="43"/>
        <end position="45"/>
    </location>
</feature>
<feature type="helix" evidence="8">
    <location>
        <begin position="52"/>
        <end position="54"/>
    </location>
</feature>
<feature type="strand" evidence="8">
    <location>
        <begin position="60"/>
        <end position="67"/>
    </location>
</feature>
<feature type="strand" evidence="8">
    <location>
        <begin position="70"/>
        <end position="76"/>
    </location>
</feature>
<feature type="turn" evidence="8">
    <location>
        <begin position="77"/>
        <end position="79"/>
    </location>
</feature>
<feature type="strand" evidence="8">
    <location>
        <begin position="80"/>
        <end position="85"/>
    </location>
</feature>
<feature type="helix" evidence="8">
    <location>
        <begin position="86"/>
        <end position="91"/>
    </location>
</feature>
<feature type="strand" evidence="8">
    <location>
        <begin position="120"/>
        <end position="122"/>
    </location>
</feature>
<feature type="helix" evidence="8">
    <location>
        <begin position="123"/>
        <end position="128"/>
    </location>
</feature>
<feature type="helix" evidence="8">
    <location>
        <begin position="130"/>
        <end position="143"/>
    </location>
</feature>
<feature type="strand" evidence="8">
    <location>
        <begin position="144"/>
        <end position="150"/>
    </location>
</feature>
<feature type="helix" evidence="8">
    <location>
        <begin position="157"/>
        <end position="163"/>
    </location>
</feature>
<feature type="strand" evidence="8">
    <location>
        <begin position="174"/>
        <end position="180"/>
    </location>
</feature>
<feature type="helix" evidence="8">
    <location>
        <begin position="188"/>
        <end position="190"/>
    </location>
</feature>
<feature type="strand" evidence="8">
    <location>
        <begin position="191"/>
        <end position="193"/>
    </location>
</feature>
<feature type="strand" evidence="8">
    <location>
        <begin position="195"/>
        <end position="198"/>
    </location>
</feature>
<feature type="strand" evidence="8">
    <location>
        <begin position="204"/>
        <end position="206"/>
    </location>
</feature>
<feature type="strand" evidence="8">
    <location>
        <begin position="209"/>
        <end position="218"/>
    </location>
</feature>
<feature type="strand" evidence="8">
    <location>
        <begin position="220"/>
        <end position="222"/>
    </location>
</feature>
<feature type="strand" evidence="8">
    <location>
        <begin position="225"/>
        <end position="229"/>
    </location>
</feature>
<feature type="helix" evidence="8">
    <location>
        <begin position="230"/>
        <end position="240"/>
    </location>
</feature>
<feature type="helix" evidence="8">
    <location>
        <begin position="242"/>
        <end position="250"/>
    </location>
</feature>
<feature type="strand" evidence="8">
    <location>
        <begin position="253"/>
        <end position="257"/>
    </location>
</feature>
<feature type="strand" evidence="8">
    <location>
        <begin position="265"/>
        <end position="269"/>
    </location>
</feature>
<feature type="strand" evidence="8">
    <location>
        <begin position="271"/>
        <end position="274"/>
    </location>
</feature>
<feature type="strand" evidence="8">
    <location>
        <begin position="278"/>
        <end position="283"/>
    </location>
</feature>
<feature type="turn" evidence="8">
    <location>
        <begin position="287"/>
        <end position="289"/>
    </location>
</feature>
<feature type="helix" evidence="8">
    <location>
        <begin position="298"/>
        <end position="300"/>
    </location>
</feature>
<feature type="helix" evidence="8">
    <location>
        <begin position="301"/>
        <end position="316"/>
    </location>
</feature>
<feature type="turn" evidence="8">
    <location>
        <begin position="318"/>
        <end position="320"/>
    </location>
</feature>
<feature type="strand" evidence="8">
    <location>
        <begin position="321"/>
        <end position="324"/>
    </location>
</feature>
<feature type="strand" evidence="8">
    <location>
        <begin position="331"/>
        <end position="335"/>
    </location>
</feature>
<feature type="turn" evidence="8">
    <location>
        <begin position="336"/>
        <end position="338"/>
    </location>
</feature>
<feature type="strand" evidence="8">
    <location>
        <begin position="339"/>
        <end position="343"/>
    </location>
</feature>
<feature type="strand" evidence="8">
    <location>
        <begin position="346"/>
        <end position="350"/>
    </location>
</feature>
<feature type="strand" evidence="8">
    <location>
        <begin position="352"/>
        <end position="359"/>
    </location>
</feature>
<feature type="helix" evidence="8">
    <location>
        <begin position="361"/>
        <end position="374"/>
    </location>
</feature>
<reference evidence="5 6 7" key="1">
    <citation type="journal article" date="2019" name="Biochemistry">
        <title>A new microbial pathway for organophosphonate degradation catalyzed by two previously misannotated non-heme-iron oxygenases.</title>
        <authorList>
            <person name="Rajakovich L.J."/>
            <person name="Pandelia M.E."/>
            <person name="Mitchell A.J."/>
            <person name="Chang W.C."/>
            <person name="Zhang B."/>
            <person name="Boal A.K."/>
            <person name="Krebs C."/>
            <person name="Bollinger J.M. Jr."/>
        </authorList>
    </citation>
    <scope>X-RAY CRYSTALLOGRAPHY (1.70 ANGSTROMS) IN COMPLEXES WITH IRON; 2-OXOGLUTARATE AND TMAEP</scope>
    <scope>FUNCTION</scope>
    <scope>CATALYTIC ACTIVITY</scope>
    <scope>COFACTOR</scope>
    <scope>SUBUNIT</scope>
    <scope>DOMAIN</scope>
</reference>
<evidence type="ECO:0000256" key="1">
    <source>
        <dbReference type="SAM" id="MobiDB-lite"/>
    </source>
</evidence>
<evidence type="ECO:0000269" key="2">
    <source>
    </source>
</evidence>
<evidence type="ECO:0000303" key="3">
    <source>
    </source>
</evidence>
<evidence type="ECO:0000305" key="4"/>
<evidence type="ECO:0007744" key="5">
    <source>
        <dbReference type="PDB" id="6NPB"/>
    </source>
</evidence>
<evidence type="ECO:0007744" key="6">
    <source>
        <dbReference type="PDB" id="6NPC"/>
    </source>
</evidence>
<evidence type="ECO:0007744" key="7">
    <source>
        <dbReference type="PDB" id="6NPD"/>
    </source>
</evidence>
<evidence type="ECO:0007829" key="8">
    <source>
        <dbReference type="PDB" id="6NPC"/>
    </source>
</evidence>
<organism>
    <name type="scientific">Leisingera caerulea</name>
    <name type="common">Phaeobacter caeruleus</name>
    <dbReference type="NCBI Taxonomy" id="506591"/>
    <lineage>
        <taxon>Bacteria</taxon>
        <taxon>Pseudomonadati</taxon>
        <taxon>Pseudomonadota</taxon>
        <taxon>Alphaproteobacteria</taxon>
        <taxon>Rhodobacterales</taxon>
        <taxon>Roseobacteraceae</taxon>
        <taxon>Leisingera</taxon>
    </lineage>
</organism>
<sequence>MPRSVTADASGSFLTLTFEDGSESRFHAIWLRDNALDPETRSPGNGQRLITIGDIPADTRISTALVDDGALTVTFAPEGKTVTFPGKWLKSNAYDTDQSSEVGRTSPDVETWDSSQPAPAFDWNEVQSDPKAKRDWLDAIARLGFAKLVNGPVREGALIECASMFGFVRETNYGKYFEVRTEVNPTNLAYTGLGLQAHTDNPYRDPVPSLQILYCLENSAEGGDSIVVDGFRAAERLRDEDPEGFALLAGNPARFEYKGSDGVHLRARRPMIELSPDGEMIAIRFNNRSSAPFVDIPFEKMEAYYAAYRRLGEFIDDPEMGVSFKLEPGESFIVDNTRVLHARLGYSGSGSRWLQGCYADKDGLFSTLNVLNAQLGG</sequence>
<proteinExistence type="evidence at protein level"/>
<keyword id="KW-0002">3D-structure</keyword>
<keyword id="KW-0223">Dioxygenase</keyword>
<keyword id="KW-0408">Iron</keyword>
<keyword id="KW-0479">Metal-binding</keyword>
<keyword id="KW-0560">Oxidoreductase</keyword>
<protein>
    <recommendedName>
        <fullName evidence="4">[2-(trimethylamino)ethyl]phosphonate dioxygenase</fullName>
        <ecNumber evidence="2">1.14.11.72</ecNumber>
    </recommendedName>
    <alternativeName>
        <fullName evidence="3">TMAEP hydroxylase</fullName>
    </alternativeName>
</protein>
<accession>A0A4V8H042</accession>
<dbReference type="EC" id="1.14.11.72" evidence="2"/>
<dbReference type="PDB" id="6NPB">
    <property type="method" value="X-ray"/>
    <property type="resolution" value="1.73 A"/>
    <property type="chains" value="A/B=1-377"/>
</dbReference>
<dbReference type="PDB" id="6NPC">
    <property type="method" value="X-ray"/>
    <property type="resolution" value="1.70 A"/>
    <property type="chains" value="A/B=1-377"/>
</dbReference>
<dbReference type="PDB" id="6NPD">
    <property type="method" value="X-ray"/>
    <property type="resolution" value="1.78 A"/>
    <property type="chains" value="A/B=1-377"/>
</dbReference>
<dbReference type="PDBsum" id="6NPB"/>
<dbReference type="PDBsum" id="6NPC"/>
<dbReference type="PDBsum" id="6NPD"/>
<dbReference type="SMR" id="A0A4V8H042"/>
<dbReference type="BioCyc" id="MetaCyc:MONOMER-21117"/>
<dbReference type="BRENDA" id="1.14.11.72">
    <property type="organism ID" value="17142"/>
</dbReference>
<dbReference type="GO" id="GO:0008336">
    <property type="term" value="F:gamma-butyrobetaine dioxygenase activity"/>
    <property type="evidence" value="ECO:0007669"/>
    <property type="project" value="UniProtKB-EC"/>
</dbReference>
<dbReference type="GO" id="GO:0005506">
    <property type="term" value="F:iron ion binding"/>
    <property type="evidence" value="ECO:0007669"/>
    <property type="project" value="InterPro"/>
</dbReference>
<dbReference type="GO" id="GO:0045329">
    <property type="term" value="P:carnitine biosynthetic process"/>
    <property type="evidence" value="ECO:0007669"/>
    <property type="project" value="InterPro"/>
</dbReference>
<dbReference type="CDD" id="cd00250">
    <property type="entry name" value="CAS_like"/>
    <property type="match status" value="1"/>
</dbReference>
<dbReference type="FunFam" id="3.60.130.10:FF:000001">
    <property type="entry name" value="Trimethyllysine dioxygenase, mitochondrial"/>
    <property type="match status" value="1"/>
</dbReference>
<dbReference type="Gene3D" id="3.30.2020.30">
    <property type="match status" value="1"/>
</dbReference>
<dbReference type="Gene3D" id="3.60.130.10">
    <property type="entry name" value="Clavaminate synthase-like"/>
    <property type="match status" value="1"/>
</dbReference>
<dbReference type="InterPro" id="IPR050411">
    <property type="entry name" value="AlphaKG_dependent_hydroxylases"/>
</dbReference>
<dbReference type="InterPro" id="IPR012775">
    <property type="entry name" value="GBBH-like"/>
</dbReference>
<dbReference type="InterPro" id="IPR010376">
    <property type="entry name" value="GBBH-like_N"/>
</dbReference>
<dbReference type="InterPro" id="IPR038492">
    <property type="entry name" value="GBBH-like_N_sf"/>
</dbReference>
<dbReference type="InterPro" id="IPR042098">
    <property type="entry name" value="TauD-like_sf"/>
</dbReference>
<dbReference type="InterPro" id="IPR003819">
    <property type="entry name" value="TauD/TfdA-like"/>
</dbReference>
<dbReference type="NCBIfam" id="TIGR02409">
    <property type="entry name" value="carnitine_bodg"/>
    <property type="match status" value="1"/>
</dbReference>
<dbReference type="PANTHER" id="PTHR10696">
    <property type="entry name" value="GAMMA-BUTYROBETAINE HYDROXYLASE-RELATED"/>
    <property type="match status" value="1"/>
</dbReference>
<dbReference type="PANTHER" id="PTHR10696:SF25">
    <property type="entry name" value="OXIDOREDUCTASE AIM17-RELATED"/>
    <property type="match status" value="1"/>
</dbReference>
<dbReference type="Pfam" id="PF06155">
    <property type="entry name" value="GBBH-like_N"/>
    <property type="match status" value="1"/>
</dbReference>
<dbReference type="Pfam" id="PF02668">
    <property type="entry name" value="TauD"/>
    <property type="match status" value="1"/>
</dbReference>
<dbReference type="SUPFAM" id="SSF51197">
    <property type="entry name" value="Clavaminate synthase-like"/>
    <property type="match status" value="1"/>
</dbReference>
<gene>
    <name evidence="3" type="primary">tmpA</name>
</gene>
<comment type="function">
    <text evidence="2">Involved in the degradation of the naturally occurring organophosphonate 2-(trimethylammonio)ethylphosphonate (TMAEP) (PubMed:30789718). Catalyzes the hydroxylation of TMAEP to (R)-1-hydroxy-2-(trimethylammonio)ethylphosphonate (OH-TMAEP) (PubMed:30789718). Is highly specific for its N-trimethylated substrate (PubMed:30789718). Cannot use gamma-butyrobetaine as substrate (PubMed:30789718).</text>
</comment>
<comment type="catalytic activity">
    <reaction evidence="2">
        <text>[2-(trimethylamino)ethyl]phosphonate + 2-oxoglutarate + O2 = [(1R)-1-hydroxy-2-(trimethylamino)ethyl]phosphonate + succinate + CO2</text>
        <dbReference type="Rhea" id="RHEA:11380"/>
        <dbReference type="ChEBI" id="CHEBI:15379"/>
        <dbReference type="ChEBI" id="CHEBI:16526"/>
        <dbReference type="ChEBI" id="CHEBI:16810"/>
        <dbReference type="ChEBI" id="CHEBI:30031"/>
        <dbReference type="ChEBI" id="CHEBI:149625"/>
        <dbReference type="ChEBI" id="CHEBI:149626"/>
        <dbReference type="EC" id="1.14.11.72"/>
    </reaction>
    <physiologicalReaction direction="left-to-right" evidence="2">
        <dbReference type="Rhea" id="RHEA:11381"/>
    </physiologicalReaction>
</comment>
<comment type="cofactor">
    <cofactor evidence="2">
        <name>Fe(2+)</name>
        <dbReference type="ChEBI" id="CHEBI:29033"/>
    </cofactor>
    <text evidence="2">Binds 1 Fe(2+) ion per subunit.</text>
</comment>
<comment type="cofactor">
    <cofactor evidence="2">
        <name>L-ascorbate</name>
        <dbReference type="ChEBI" id="CHEBI:38290"/>
    </cofactor>
</comment>
<comment type="subunit">
    <text evidence="2">Homodimer.</text>
</comment>
<comment type="domain">
    <text evidence="2">Contains an N-terminal homodimerization domain, a short linker region and a C-terminal catalytic domain (PubMed:30789718). The N-terminal domain may function in substrate binding by stabilizing the closed conformation (PubMed:30789718). Does not possess the N-terminal Zn(II)-binding cysteine sequence motif found in gamma-butyrobetaine hydroxylases (PubMed:30789718).</text>
</comment>
<comment type="similarity">
    <text evidence="4">Belongs to the gamma-BBH/TMLD family.</text>
</comment>